<keyword id="KW-0963">Cytoplasm</keyword>
<keyword id="KW-0342">GTP-binding</keyword>
<keyword id="KW-0378">Hydrolase</keyword>
<keyword id="KW-0460">Magnesium</keyword>
<keyword id="KW-0479">Metal-binding</keyword>
<keyword id="KW-0547">Nucleotide-binding</keyword>
<keyword id="KW-0630">Potassium</keyword>
<keyword id="KW-1185">Reference proteome</keyword>
<keyword id="KW-0819">tRNA processing</keyword>
<gene>
    <name evidence="1" type="primary">mnmE</name>
    <name evidence="1" type="synonym">trmE</name>
    <name type="ordered locus">ECH_0060</name>
</gene>
<name>MNME_EHRCR</name>
<evidence type="ECO:0000255" key="1">
    <source>
        <dbReference type="HAMAP-Rule" id="MF_00379"/>
    </source>
</evidence>
<organism>
    <name type="scientific">Ehrlichia chaffeensis (strain ATCC CRL-10679 / Arkansas)</name>
    <dbReference type="NCBI Taxonomy" id="205920"/>
    <lineage>
        <taxon>Bacteria</taxon>
        <taxon>Pseudomonadati</taxon>
        <taxon>Pseudomonadota</taxon>
        <taxon>Alphaproteobacteria</taxon>
        <taxon>Rickettsiales</taxon>
        <taxon>Anaplasmataceae</taxon>
        <taxon>Ehrlichia</taxon>
    </lineage>
</organism>
<feature type="chain" id="PRO_0000345778" description="tRNA modification GTPase MnmE">
    <location>
        <begin position="1"/>
        <end position="439"/>
    </location>
</feature>
<feature type="domain" description="TrmE-type G">
    <location>
        <begin position="211"/>
        <end position="364"/>
    </location>
</feature>
<feature type="binding site" evidence="1">
    <location>
        <position position="20"/>
    </location>
    <ligand>
        <name>(6S)-5-formyl-5,6,7,8-tetrahydrofolate</name>
        <dbReference type="ChEBI" id="CHEBI:57457"/>
    </ligand>
</feature>
<feature type="binding site" evidence="1">
    <location>
        <position position="78"/>
    </location>
    <ligand>
        <name>(6S)-5-formyl-5,6,7,8-tetrahydrofolate</name>
        <dbReference type="ChEBI" id="CHEBI:57457"/>
    </ligand>
</feature>
<feature type="binding site" evidence="1">
    <location>
        <position position="116"/>
    </location>
    <ligand>
        <name>(6S)-5-formyl-5,6,7,8-tetrahydrofolate</name>
        <dbReference type="ChEBI" id="CHEBI:57457"/>
    </ligand>
</feature>
<feature type="binding site" evidence="1">
    <location>
        <begin position="221"/>
        <end position="226"/>
    </location>
    <ligand>
        <name>GTP</name>
        <dbReference type="ChEBI" id="CHEBI:37565"/>
    </ligand>
</feature>
<feature type="binding site" evidence="1">
    <location>
        <position position="225"/>
    </location>
    <ligand>
        <name>Mg(2+)</name>
        <dbReference type="ChEBI" id="CHEBI:18420"/>
    </ligand>
</feature>
<feature type="binding site" evidence="1">
    <location>
        <begin position="240"/>
        <end position="246"/>
    </location>
    <ligand>
        <name>GTP</name>
        <dbReference type="ChEBI" id="CHEBI:37565"/>
    </ligand>
</feature>
<feature type="binding site" evidence="1">
    <location>
        <position position="246"/>
    </location>
    <ligand>
        <name>Mg(2+)</name>
        <dbReference type="ChEBI" id="CHEBI:18420"/>
    </ligand>
</feature>
<feature type="binding site" evidence="1">
    <location>
        <begin position="265"/>
        <end position="268"/>
    </location>
    <ligand>
        <name>GTP</name>
        <dbReference type="ChEBI" id="CHEBI:37565"/>
    </ligand>
</feature>
<feature type="binding site" evidence="1">
    <location>
        <position position="439"/>
    </location>
    <ligand>
        <name>(6S)-5-formyl-5,6,7,8-tetrahydrofolate</name>
        <dbReference type="ChEBI" id="CHEBI:57457"/>
    </ligand>
</feature>
<reference key="1">
    <citation type="journal article" date="2006" name="PLoS Genet.">
        <title>Comparative genomics of emerging human ehrlichiosis agents.</title>
        <authorList>
            <person name="Dunning Hotopp J.C."/>
            <person name="Lin M."/>
            <person name="Madupu R."/>
            <person name="Crabtree J."/>
            <person name="Angiuoli S.V."/>
            <person name="Eisen J.A."/>
            <person name="Seshadri R."/>
            <person name="Ren Q."/>
            <person name="Wu M."/>
            <person name="Utterback T.R."/>
            <person name="Smith S."/>
            <person name="Lewis M."/>
            <person name="Khouri H."/>
            <person name="Zhang C."/>
            <person name="Niu H."/>
            <person name="Lin Q."/>
            <person name="Ohashi N."/>
            <person name="Zhi N."/>
            <person name="Nelson W.C."/>
            <person name="Brinkac L.M."/>
            <person name="Dodson R.J."/>
            <person name="Rosovitz M.J."/>
            <person name="Sundaram J.P."/>
            <person name="Daugherty S.C."/>
            <person name="Davidsen T."/>
            <person name="Durkin A.S."/>
            <person name="Gwinn M.L."/>
            <person name="Haft D.H."/>
            <person name="Selengut J.D."/>
            <person name="Sullivan S.A."/>
            <person name="Zafar N."/>
            <person name="Zhou L."/>
            <person name="Benahmed F."/>
            <person name="Forberger H."/>
            <person name="Halpin R."/>
            <person name="Mulligan S."/>
            <person name="Robinson J."/>
            <person name="White O."/>
            <person name="Rikihisa Y."/>
            <person name="Tettelin H."/>
        </authorList>
    </citation>
    <scope>NUCLEOTIDE SEQUENCE [LARGE SCALE GENOMIC DNA]</scope>
    <source>
        <strain>ATCC CRL-10679 / Arkansas</strain>
    </source>
</reference>
<dbReference type="EC" id="3.6.-.-" evidence="1"/>
<dbReference type="EMBL" id="CP000236">
    <property type="protein sequence ID" value="ABD45538.1"/>
    <property type="molecule type" value="Genomic_DNA"/>
</dbReference>
<dbReference type="RefSeq" id="WP_006010697.1">
    <property type="nucleotide sequence ID" value="NC_007799.1"/>
</dbReference>
<dbReference type="SMR" id="Q2GI42"/>
<dbReference type="STRING" id="205920.ECH_0060"/>
<dbReference type="KEGG" id="ech:ECH_0060"/>
<dbReference type="eggNOG" id="COG0486">
    <property type="taxonomic scope" value="Bacteria"/>
</dbReference>
<dbReference type="HOGENOM" id="CLU_019624_3_1_5"/>
<dbReference type="OrthoDB" id="9805918at2"/>
<dbReference type="Proteomes" id="UP000008320">
    <property type="component" value="Chromosome"/>
</dbReference>
<dbReference type="GO" id="GO:0005737">
    <property type="term" value="C:cytoplasm"/>
    <property type="evidence" value="ECO:0007669"/>
    <property type="project" value="UniProtKB-SubCell"/>
</dbReference>
<dbReference type="GO" id="GO:0005525">
    <property type="term" value="F:GTP binding"/>
    <property type="evidence" value="ECO:0007669"/>
    <property type="project" value="UniProtKB-UniRule"/>
</dbReference>
<dbReference type="GO" id="GO:0003924">
    <property type="term" value="F:GTPase activity"/>
    <property type="evidence" value="ECO:0007669"/>
    <property type="project" value="UniProtKB-UniRule"/>
</dbReference>
<dbReference type="GO" id="GO:0046872">
    <property type="term" value="F:metal ion binding"/>
    <property type="evidence" value="ECO:0007669"/>
    <property type="project" value="UniProtKB-KW"/>
</dbReference>
<dbReference type="GO" id="GO:0030488">
    <property type="term" value="P:tRNA methylation"/>
    <property type="evidence" value="ECO:0007669"/>
    <property type="project" value="TreeGrafter"/>
</dbReference>
<dbReference type="GO" id="GO:0002098">
    <property type="term" value="P:tRNA wobble uridine modification"/>
    <property type="evidence" value="ECO:0007669"/>
    <property type="project" value="TreeGrafter"/>
</dbReference>
<dbReference type="CDD" id="cd04164">
    <property type="entry name" value="trmE"/>
    <property type="match status" value="1"/>
</dbReference>
<dbReference type="CDD" id="cd14858">
    <property type="entry name" value="TrmE_N"/>
    <property type="match status" value="1"/>
</dbReference>
<dbReference type="Gene3D" id="3.40.50.300">
    <property type="entry name" value="P-loop containing nucleotide triphosphate hydrolases"/>
    <property type="match status" value="1"/>
</dbReference>
<dbReference type="Gene3D" id="3.30.1360.120">
    <property type="entry name" value="Probable tRNA modification gtpase trme, domain 1"/>
    <property type="match status" value="1"/>
</dbReference>
<dbReference type="Gene3D" id="1.20.120.430">
    <property type="entry name" value="tRNA modification GTPase MnmE domain 2"/>
    <property type="match status" value="1"/>
</dbReference>
<dbReference type="HAMAP" id="MF_00379">
    <property type="entry name" value="GTPase_MnmE"/>
    <property type="match status" value="1"/>
</dbReference>
<dbReference type="InterPro" id="IPR031168">
    <property type="entry name" value="G_TrmE"/>
</dbReference>
<dbReference type="InterPro" id="IPR006073">
    <property type="entry name" value="GTP-bd"/>
</dbReference>
<dbReference type="InterPro" id="IPR018948">
    <property type="entry name" value="GTP-bd_TrmE_N"/>
</dbReference>
<dbReference type="InterPro" id="IPR004520">
    <property type="entry name" value="GTPase_MnmE"/>
</dbReference>
<dbReference type="InterPro" id="IPR027368">
    <property type="entry name" value="MnmE_dom2"/>
</dbReference>
<dbReference type="InterPro" id="IPR025867">
    <property type="entry name" value="MnmE_helical"/>
</dbReference>
<dbReference type="InterPro" id="IPR027417">
    <property type="entry name" value="P-loop_NTPase"/>
</dbReference>
<dbReference type="InterPro" id="IPR005225">
    <property type="entry name" value="Small_GTP-bd"/>
</dbReference>
<dbReference type="InterPro" id="IPR027266">
    <property type="entry name" value="TrmE/GcvT_dom1"/>
</dbReference>
<dbReference type="NCBIfam" id="TIGR00450">
    <property type="entry name" value="mnmE_trmE_thdF"/>
    <property type="match status" value="1"/>
</dbReference>
<dbReference type="NCBIfam" id="NF003661">
    <property type="entry name" value="PRK05291.1-3"/>
    <property type="match status" value="1"/>
</dbReference>
<dbReference type="NCBIfam" id="TIGR00231">
    <property type="entry name" value="small_GTP"/>
    <property type="match status" value="1"/>
</dbReference>
<dbReference type="PANTHER" id="PTHR42714">
    <property type="entry name" value="TRNA MODIFICATION GTPASE GTPBP3"/>
    <property type="match status" value="1"/>
</dbReference>
<dbReference type="PANTHER" id="PTHR42714:SF2">
    <property type="entry name" value="TRNA MODIFICATION GTPASE GTPBP3, MITOCHONDRIAL"/>
    <property type="match status" value="1"/>
</dbReference>
<dbReference type="Pfam" id="PF01926">
    <property type="entry name" value="MMR_HSR1"/>
    <property type="match status" value="1"/>
</dbReference>
<dbReference type="Pfam" id="PF12631">
    <property type="entry name" value="MnmE_helical"/>
    <property type="match status" value="1"/>
</dbReference>
<dbReference type="Pfam" id="PF10396">
    <property type="entry name" value="TrmE_N"/>
    <property type="match status" value="1"/>
</dbReference>
<dbReference type="SUPFAM" id="SSF52540">
    <property type="entry name" value="P-loop containing nucleoside triphosphate hydrolases"/>
    <property type="match status" value="1"/>
</dbReference>
<dbReference type="SUPFAM" id="SSF116878">
    <property type="entry name" value="TrmE connector domain"/>
    <property type="match status" value="1"/>
</dbReference>
<dbReference type="PROSITE" id="PS51709">
    <property type="entry name" value="G_TRME"/>
    <property type="match status" value="1"/>
</dbReference>
<protein>
    <recommendedName>
        <fullName evidence="1">tRNA modification GTPase MnmE</fullName>
        <ecNumber evidence="1">3.6.-.-</ecNumber>
    </recommendedName>
</protein>
<sequence length="439" mass="49223">MTTIFALCTPWGRSGVAVIRISGEDAAKAFVHFGINSSIKPRTATFTPLYDKDGEVIDEAIVVYFVAPNSFTGEDVVEFHTHGSFAVIKMILAELGKIFVPAGPGEFSLRAFLNNKVDLTRAEAIVDLINSETEMQAKQAIRQMSGVLEKLYQNWRQQLIDILSNIEAYIDFPEEVNSSAIANIDYLLNNLQKSLESHLNDDRRGERLRQGIYVTILGEPNSGKSTLFNHLAKRDIAIVSEYAGTTRDPLEAHIDVAGYPIIIIDTAGIRESTDPVEQEGIKRAKLKAENADFKIVMLPYEKRDIFNREIMSLIDDKSICILSKADNITDQKLIPVFDFSFIPISVYCNIGIENLLNLIKQKVEKDFQFCNTDPFITSERQRKHIQNTLNIIKSVDLSLPMEIVSEDLRLSVRELGKVVGVISDDDILDNVFGKFCIGK</sequence>
<accession>Q2GI42</accession>
<comment type="function">
    <text evidence="1">Exhibits a very high intrinsic GTPase hydrolysis rate. Involved in the addition of a carboxymethylaminomethyl (cmnm) group at the wobble position (U34) of certain tRNAs, forming tRNA-cmnm(5)s(2)U34.</text>
</comment>
<comment type="cofactor">
    <cofactor evidence="1">
        <name>K(+)</name>
        <dbReference type="ChEBI" id="CHEBI:29103"/>
    </cofactor>
    <text evidence="1">Binds 1 potassium ion per subunit.</text>
</comment>
<comment type="subunit">
    <text evidence="1">Homodimer. Heterotetramer of two MnmE and two MnmG subunits.</text>
</comment>
<comment type="subcellular location">
    <subcellularLocation>
        <location evidence="1">Cytoplasm</location>
    </subcellularLocation>
</comment>
<comment type="similarity">
    <text evidence="1">Belongs to the TRAFAC class TrmE-Era-EngA-EngB-Septin-like GTPase superfamily. TrmE GTPase family.</text>
</comment>
<proteinExistence type="inferred from homology"/>